<evidence type="ECO:0000269" key="1">
    <source>
    </source>
</evidence>
<evidence type="ECO:0000269" key="2">
    <source>
    </source>
</evidence>
<evidence type="ECO:0000269" key="3">
    <source>
    </source>
</evidence>
<evidence type="ECO:0000269" key="4">
    <source>
    </source>
</evidence>
<evidence type="ECO:0000269" key="5">
    <source>
    </source>
</evidence>
<evidence type="ECO:0000269" key="6">
    <source>
    </source>
</evidence>
<evidence type="ECO:0000269" key="7">
    <source>
    </source>
</evidence>
<evidence type="ECO:0000269" key="8">
    <source>
    </source>
</evidence>
<evidence type="ECO:0000269" key="9">
    <source>
    </source>
</evidence>
<evidence type="ECO:0000269" key="10">
    <source>
    </source>
</evidence>
<evidence type="ECO:0000269" key="11">
    <source>
    </source>
</evidence>
<evidence type="ECO:0000269" key="12">
    <source>
    </source>
</evidence>
<evidence type="ECO:0000269" key="13">
    <source>
    </source>
</evidence>
<evidence type="ECO:0000269" key="14">
    <source>
    </source>
</evidence>
<evidence type="ECO:0000269" key="15">
    <source>
    </source>
</evidence>
<evidence type="ECO:0000303" key="16">
    <source>
    </source>
</evidence>
<evidence type="ECO:0000303" key="17">
    <source>
    </source>
</evidence>
<evidence type="ECO:0000303" key="18">
    <source>
    </source>
</evidence>
<evidence type="ECO:0000303" key="19">
    <source>
    </source>
</evidence>
<evidence type="ECO:0000305" key="20"/>
<evidence type="ECO:0000305" key="21">
    <source>
    </source>
</evidence>
<evidence type="ECO:0000312" key="22">
    <source>
        <dbReference type="HGNC" id="HGNC:13315"/>
    </source>
</evidence>
<evidence type="ECO:0007829" key="23">
    <source>
        <dbReference type="PDB" id="1VKG"/>
    </source>
</evidence>
<evidence type="ECO:0007829" key="24">
    <source>
        <dbReference type="PDB" id="1W22"/>
    </source>
</evidence>
<evidence type="ECO:0007829" key="25">
    <source>
        <dbReference type="PDB" id="3EZP"/>
    </source>
</evidence>
<evidence type="ECO:0007829" key="26">
    <source>
        <dbReference type="PDB" id="3F0R"/>
    </source>
</evidence>
<evidence type="ECO:0007829" key="27">
    <source>
        <dbReference type="PDB" id="4RN0"/>
    </source>
</evidence>
<evidence type="ECO:0007829" key="28">
    <source>
        <dbReference type="PDB" id="5D1C"/>
    </source>
</evidence>
<evidence type="ECO:0007829" key="29">
    <source>
        <dbReference type="PDB" id="5DC8"/>
    </source>
</evidence>
<evidence type="ECO:0007829" key="30">
    <source>
        <dbReference type="PDB" id="5VI6"/>
    </source>
</evidence>
<organism>
    <name type="scientific">Homo sapiens</name>
    <name type="common">Human</name>
    <dbReference type="NCBI Taxonomy" id="9606"/>
    <lineage>
        <taxon>Eukaryota</taxon>
        <taxon>Metazoa</taxon>
        <taxon>Chordata</taxon>
        <taxon>Craniata</taxon>
        <taxon>Vertebrata</taxon>
        <taxon>Euteleostomi</taxon>
        <taxon>Mammalia</taxon>
        <taxon>Eutheria</taxon>
        <taxon>Euarchontoglires</taxon>
        <taxon>Primates</taxon>
        <taxon>Haplorrhini</taxon>
        <taxon>Catarrhini</taxon>
        <taxon>Hominidae</taxon>
        <taxon>Homo</taxon>
    </lineage>
</organism>
<accession>Q9BY41</accession>
<accession>A6ND12</accession>
<accession>A6ND61</accession>
<accession>A6NET3</accession>
<accession>A6NJR3</accession>
<accession>A8MQ62</accession>
<accession>B4DKN0</accession>
<accession>B4DV22</accession>
<accession>Q86VC8</accession>
<accession>Q9NP76</accession>
<accession>Q9NYH4</accession>
<proteinExistence type="evidence at protein level"/>
<keyword id="KW-0002">3D-structure</keyword>
<keyword id="KW-0025">Alternative splicing</keyword>
<keyword id="KW-0156">Chromatin regulator</keyword>
<keyword id="KW-0158">Chromosome</keyword>
<keyword id="KW-0963">Cytoplasm</keyword>
<keyword id="KW-0225">Disease variant</keyword>
<keyword id="KW-0378">Hydrolase</keyword>
<keyword id="KW-0991">Intellectual disability</keyword>
<keyword id="KW-0479">Metal-binding</keyword>
<keyword id="KW-0539">Nucleus</keyword>
<keyword id="KW-0550">Obesity</keyword>
<keyword id="KW-0597">Phosphoprotein</keyword>
<keyword id="KW-1267">Proteomics identification</keyword>
<keyword id="KW-1185">Reference proteome</keyword>
<keyword id="KW-0678">Repressor</keyword>
<keyword id="KW-0804">Transcription</keyword>
<keyword id="KW-0805">Transcription regulation</keyword>
<sequence length="377" mass="41758">MEEPEEPADSGQSLVPVYIYSPEYVSMCDSLAKIPKRASMVHSLIEAYALHKQMRIVKPKVASMEEMATFHTDAYLQHLQKVSQEGDDDHPDSIEYGLGYDCPATEGIFDYAAAIGGATITAAQCLIDGMCKVAINWSGGWHHAKKDEASGFCYLNDAVLGILRLRRKFERILYVDLDLHHGDGVEDAFSFTSKVMTVSLHKFSPGFFPGTGDVSDVGLGKGRYYSVNVPIQDGIQDEKYYQICESVLKEVYQAFNPKAVVLQLGADTIAGDPMCSFNMTPVGIGKCLKYILQWQLATLILGGGGYNLANTARCWTYLTGVILGKTLSSEIPDHEFFTAYGPDYVLEITPSCRPDRNEPHRIQQILNYIKGNLKHVV</sequence>
<reference key="1">
    <citation type="journal article" date="2000" name="J. Biol. Chem.">
        <title>Cloning and characterization of a novel human class I histone deacetylase that functions as a transcription repressor.</title>
        <authorList>
            <person name="Hu E."/>
            <person name="Chen Z."/>
            <person name="Fredrickson T."/>
            <person name="Zhu Y."/>
            <person name="Kirkpatrick R."/>
            <person name="Zhang G.-F."/>
            <person name="Johanson K."/>
            <person name="Sung C.-M."/>
            <person name="Liu R."/>
            <person name="Winkler J."/>
        </authorList>
    </citation>
    <scope>NUCLEOTIDE SEQUENCE [MRNA] (ISOFORM 1)</scope>
    <scope>FUNCTION</scope>
    <scope>CATALYTIC ACTIVITY</scope>
    <scope>SUBCELLULAR LOCATION</scope>
    <source>
        <tissue>Kidney</tissue>
    </source>
</reference>
<reference key="2">
    <citation type="journal article" date="2000" name="Biochem. J.">
        <title>Cloning and characterization of a novel human histone deacetylase, HDAC8.</title>
        <authorList>
            <person name="Buggy J.J."/>
            <person name="Sideris M.L."/>
            <person name="Mak P."/>
            <person name="Lorimer D.D."/>
            <person name="McIntosh B."/>
            <person name="Clark J.M."/>
        </authorList>
    </citation>
    <scope>NUCLEOTIDE SEQUENCE [MRNA] (ISOFORM 1)</scope>
    <scope>TISSUE SPECIFICITY</scope>
    <scope>FUNCTION</scope>
    <scope>CATALYTIC ACTIVITY</scope>
    <scope>MUTAGENESIS OF 142-HIS-HIS-143</scope>
    <source>
        <tissue>Uterus</tissue>
    </source>
</reference>
<reference key="3">
    <citation type="journal article" date="2000" name="FEBS Lett.">
        <title>Cloning and characterization of human histone deacetylase 8.</title>
        <authorList>
            <person name="Van den Wyngaert I."/>
            <person name="de Vries W."/>
            <person name="Kremer A."/>
            <person name="Neefs J.-M."/>
            <person name="Verhasselt P."/>
            <person name="Luyten W.H.M.L."/>
            <person name="Kass S.U."/>
        </authorList>
    </citation>
    <scope>NUCLEOTIDE SEQUENCE [MRNA] (ISOFORM 1)</scope>
    <scope>FUNCTION</scope>
    <scope>CATALYTIC ACTIVITY</scope>
    <source>
        <tissue>Heart</tissue>
    </source>
</reference>
<reference key="4">
    <citation type="journal article" date="1996" name="Genome Res.">
        <title>Normalization and subtraction: two approaches to facilitate gene discovery.</title>
        <authorList>
            <person name="Bonaldo M.F."/>
            <person name="Lennon G."/>
            <person name="Soares M.B."/>
        </authorList>
    </citation>
    <scope>NUCLEOTIDE SEQUENCE [LARGE SCALE MRNA] (ISOFORM 8)</scope>
</reference>
<reference key="5">
    <citation type="journal article" date="2004" name="Nat. Genet.">
        <title>Complete sequencing and characterization of 21,243 full-length human cDNAs.</title>
        <authorList>
            <person name="Ota T."/>
            <person name="Suzuki Y."/>
            <person name="Nishikawa T."/>
            <person name="Otsuki T."/>
            <person name="Sugiyama T."/>
            <person name="Irie R."/>
            <person name="Wakamatsu A."/>
            <person name="Hayashi K."/>
            <person name="Sato H."/>
            <person name="Nagai K."/>
            <person name="Kimura K."/>
            <person name="Makita H."/>
            <person name="Sekine M."/>
            <person name="Obayashi M."/>
            <person name="Nishi T."/>
            <person name="Shibahara T."/>
            <person name="Tanaka T."/>
            <person name="Ishii S."/>
            <person name="Yamamoto J."/>
            <person name="Saito K."/>
            <person name="Kawai Y."/>
            <person name="Isono Y."/>
            <person name="Nakamura Y."/>
            <person name="Nagahari K."/>
            <person name="Murakami K."/>
            <person name="Yasuda T."/>
            <person name="Iwayanagi T."/>
            <person name="Wagatsuma M."/>
            <person name="Shiratori A."/>
            <person name="Sudo H."/>
            <person name="Hosoiri T."/>
            <person name="Kaku Y."/>
            <person name="Kodaira H."/>
            <person name="Kondo H."/>
            <person name="Sugawara M."/>
            <person name="Takahashi M."/>
            <person name="Kanda K."/>
            <person name="Yokoi T."/>
            <person name="Furuya T."/>
            <person name="Kikkawa E."/>
            <person name="Omura Y."/>
            <person name="Abe K."/>
            <person name="Kamihara K."/>
            <person name="Katsuta N."/>
            <person name="Sato K."/>
            <person name="Tanikawa M."/>
            <person name="Yamazaki M."/>
            <person name="Ninomiya K."/>
            <person name="Ishibashi T."/>
            <person name="Yamashita H."/>
            <person name="Murakawa K."/>
            <person name="Fujimori K."/>
            <person name="Tanai H."/>
            <person name="Kimata M."/>
            <person name="Watanabe M."/>
            <person name="Hiraoka S."/>
            <person name="Chiba Y."/>
            <person name="Ishida S."/>
            <person name="Ono Y."/>
            <person name="Takiguchi S."/>
            <person name="Watanabe S."/>
            <person name="Yosida M."/>
            <person name="Hotuta T."/>
            <person name="Kusano J."/>
            <person name="Kanehori K."/>
            <person name="Takahashi-Fujii A."/>
            <person name="Hara H."/>
            <person name="Tanase T.-O."/>
            <person name="Nomura Y."/>
            <person name="Togiya S."/>
            <person name="Komai F."/>
            <person name="Hara R."/>
            <person name="Takeuchi K."/>
            <person name="Arita M."/>
            <person name="Imose N."/>
            <person name="Musashino K."/>
            <person name="Yuuki H."/>
            <person name="Oshima A."/>
            <person name="Sasaki N."/>
            <person name="Aotsuka S."/>
            <person name="Yoshikawa Y."/>
            <person name="Matsunawa H."/>
            <person name="Ichihara T."/>
            <person name="Shiohata N."/>
            <person name="Sano S."/>
            <person name="Moriya S."/>
            <person name="Momiyama H."/>
            <person name="Satoh N."/>
            <person name="Takami S."/>
            <person name="Terashima Y."/>
            <person name="Suzuki O."/>
            <person name="Nakagawa S."/>
            <person name="Senoh A."/>
            <person name="Mizoguchi H."/>
            <person name="Goto Y."/>
            <person name="Shimizu F."/>
            <person name="Wakebe H."/>
            <person name="Hishigaki H."/>
            <person name="Watanabe T."/>
            <person name="Sugiyama A."/>
            <person name="Takemoto M."/>
            <person name="Kawakami B."/>
            <person name="Yamazaki M."/>
            <person name="Watanabe K."/>
            <person name="Kumagai A."/>
            <person name="Itakura S."/>
            <person name="Fukuzumi Y."/>
            <person name="Fujimori Y."/>
            <person name="Komiyama M."/>
            <person name="Tashiro H."/>
            <person name="Tanigami A."/>
            <person name="Fujiwara T."/>
            <person name="Ono T."/>
            <person name="Yamada K."/>
            <person name="Fujii Y."/>
            <person name="Ozaki K."/>
            <person name="Hirao M."/>
            <person name="Ohmori Y."/>
            <person name="Kawabata A."/>
            <person name="Hikiji T."/>
            <person name="Kobatake N."/>
            <person name="Inagaki H."/>
            <person name="Ikema Y."/>
            <person name="Okamoto S."/>
            <person name="Okitani R."/>
            <person name="Kawakami T."/>
            <person name="Noguchi S."/>
            <person name="Itoh T."/>
            <person name="Shigeta K."/>
            <person name="Senba T."/>
            <person name="Matsumura K."/>
            <person name="Nakajima Y."/>
            <person name="Mizuno T."/>
            <person name="Morinaga M."/>
            <person name="Sasaki M."/>
            <person name="Togashi T."/>
            <person name="Oyama M."/>
            <person name="Hata H."/>
            <person name="Watanabe M."/>
            <person name="Komatsu T."/>
            <person name="Mizushima-Sugano J."/>
            <person name="Satoh T."/>
            <person name="Shirai Y."/>
            <person name="Takahashi Y."/>
            <person name="Nakagawa K."/>
            <person name="Okumura K."/>
            <person name="Nagase T."/>
            <person name="Nomura N."/>
            <person name="Kikuchi H."/>
            <person name="Masuho Y."/>
            <person name="Yamashita R."/>
            <person name="Nakai K."/>
            <person name="Yada T."/>
            <person name="Nakamura Y."/>
            <person name="Ohara O."/>
            <person name="Isogai T."/>
            <person name="Sugano S."/>
        </authorList>
    </citation>
    <scope>NUCLEOTIDE SEQUENCE [LARGE SCALE MRNA] (ISOFORMS 4 AND 5)</scope>
    <source>
        <tissue>Colon</tissue>
        <tissue>Small intestine</tissue>
    </source>
</reference>
<reference key="6">
    <citation type="journal article" date="2005" name="Nature">
        <title>The DNA sequence of the human X chromosome.</title>
        <authorList>
            <person name="Ross M.T."/>
            <person name="Grafham D.V."/>
            <person name="Coffey A.J."/>
            <person name="Scherer S."/>
            <person name="McLay K."/>
            <person name="Muzny D."/>
            <person name="Platzer M."/>
            <person name="Howell G.R."/>
            <person name="Burrows C."/>
            <person name="Bird C.P."/>
            <person name="Frankish A."/>
            <person name="Lovell F.L."/>
            <person name="Howe K.L."/>
            <person name="Ashurst J.L."/>
            <person name="Fulton R.S."/>
            <person name="Sudbrak R."/>
            <person name="Wen G."/>
            <person name="Jones M.C."/>
            <person name="Hurles M.E."/>
            <person name="Andrews T.D."/>
            <person name="Scott C.E."/>
            <person name="Searle S."/>
            <person name="Ramser J."/>
            <person name="Whittaker A."/>
            <person name="Deadman R."/>
            <person name="Carter N.P."/>
            <person name="Hunt S.E."/>
            <person name="Chen R."/>
            <person name="Cree A."/>
            <person name="Gunaratne P."/>
            <person name="Havlak P."/>
            <person name="Hodgson A."/>
            <person name="Metzker M.L."/>
            <person name="Richards S."/>
            <person name="Scott G."/>
            <person name="Steffen D."/>
            <person name="Sodergren E."/>
            <person name="Wheeler D.A."/>
            <person name="Worley K.C."/>
            <person name="Ainscough R."/>
            <person name="Ambrose K.D."/>
            <person name="Ansari-Lari M.A."/>
            <person name="Aradhya S."/>
            <person name="Ashwell R.I."/>
            <person name="Babbage A.K."/>
            <person name="Bagguley C.L."/>
            <person name="Ballabio A."/>
            <person name="Banerjee R."/>
            <person name="Barker G.E."/>
            <person name="Barlow K.F."/>
            <person name="Barrett I.P."/>
            <person name="Bates K.N."/>
            <person name="Beare D.M."/>
            <person name="Beasley H."/>
            <person name="Beasley O."/>
            <person name="Beck A."/>
            <person name="Bethel G."/>
            <person name="Blechschmidt K."/>
            <person name="Brady N."/>
            <person name="Bray-Allen S."/>
            <person name="Bridgeman A.M."/>
            <person name="Brown A.J."/>
            <person name="Brown M.J."/>
            <person name="Bonnin D."/>
            <person name="Bruford E.A."/>
            <person name="Buhay C."/>
            <person name="Burch P."/>
            <person name="Burford D."/>
            <person name="Burgess J."/>
            <person name="Burrill W."/>
            <person name="Burton J."/>
            <person name="Bye J.M."/>
            <person name="Carder C."/>
            <person name="Carrel L."/>
            <person name="Chako J."/>
            <person name="Chapman J.C."/>
            <person name="Chavez D."/>
            <person name="Chen E."/>
            <person name="Chen G."/>
            <person name="Chen Y."/>
            <person name="Chen Z."/>
            <person name="Chinault C."/>
            <person name="Ciccodicola A."/>
            <person name="Clark S.Y."/>
            <person name="Clarke G."/>
            <person name="Clee C.M."/>
            <person name="Clegg S."/>
            <person name="Clerc-Blankenburg K."/>
            <person name="Clifford K."/>
            <person name="Cobley V."/>
            <person name="Cole C.G."/>
            <person name="Conquer J.S."/>
            <person name="Corby N."/>
            <person name="Connor R.E."/>
            <person name="David R."/>
            <person name="Davies J."/>
            <person name="Davis C."/>
            <person name="Davis J."/>
            <person name="Delgado O."/>
            <person name="Deshazo D."/>
            <person name="Dhami P."/>
            <person name="Ding Y."/>
            <person name="Dinh H."/>
            <person name="Dodsworth S."/>
            <person name="Draper H."/>
            <person name="Dugan-Rocha S."/>
            <person name="Dunham A."/>
            <person name="Dunn M."/>
            <person name="Durbin K.J."/>
            <person name="Dutta I."/>
            <person name="Eades T."/>
            <person name="Ellwood M."/>
            <person name="Emery-Cohen A."/>
            <person name="Errington H."/>
            <person name="Evans K.L."/>
            <person name="Faulkner L."/>
            <person name="Francis F."/>
            <person name="Frankland J."/>
            <person name="Fraser A.E."/>
            <person name="Galgoczy P."/>
            <person name="Gilbert J."/>
            <person name="Gill R."/>
            <person name="Gloeckner G."/>
            <person name="Gregory S.G."/>
            <person name="Gribble S."/>
            <person name="Griffiths C."/>
            <person name="Grocock R."/>
            <person name="Gu Y."/>
            <person name="Gwilliam R."/>
            <person name="Hamilton C."/>
            <person name="Hart E.A."/>
            <person name="Hawes A."/>
            <person name="Heath P.D."/>
            <person name="Heitmann K."/>
            <person name="Hennig S."/>
            <person name="Hernandez J."/>
            <person name="Hinzmann B."/>
            <person name="Ho S."/>
            <person name="Hoffs M."/>
            <person name="Howden P.J."/>
            <person name="Huckle E.J."/>
            <person name="Hume J."/>
            <person name="Hunt P.J."/>
            <person name="Hunt A.R."/>
            <person name="Isherwood J."/>
            <person name="Jacob L."/>
            <person name="Johnson D."/>
            <person name="Jones S."/>
            <person name="de Jong P.J."/>
            <person name="Joseph S.S."/>
            <person name="Keenan S."/>
            <person name="Kelly S."/>
            <person name="Kershaw J.K."/>
            <person name="Khan Z."/>
            <person name="Kioschis P."/>
            <person name="Klages S."/>
            <person name="Knights A.J."/>
            <person name="Kosiura A."/>
            <person name="Kovar-Smith C."/>
            <person name="Laird G.K."/>
            <person name="Langford C."/>
            <person name="Lawlor S."/>
            <person name="Leversha M."/>
            <person name="Lewis L."/>
            <person name="Liu W."/>
            <person name="Lloyd C."/>
            <person name="Lloyd D.M."/>
            <person name="Loulseged H."/>
            <person name="Loveland J.E."/>
            <person name="Lovell J.D."/>
            <person name="Lozado R."/>
            <person name="Lu J."/>
            <person name="Lyne R."/>
            <person name="Ma J."/>
            <person name="Maheshwari M."/>
            <person name="Matthews L.H."/>
            <person name="McDowall J."/>
            <person name="McLaren S."/>
            <person name="McMurray A."/>
            <person name="Meidl P."/>
            <person name="Meitinger T."/>
            <person name="Milne S."/>
            <person name="Miner G."/>
            <person name="Mistry S.L."/>
            <person name="Morgan M."/>
            <person name="Morris S."/>
            <person name="Mueller I."/>
            <person name="Mullikin J.C."/>
            <person name="Nguyen N."/>
            <person name="Nordsiek G."/>
            <person name="Nyakatura G."/>
            <person name="O'dell C.N."/>
            <person name="Okwuonu G."/>
            <person name="Palmer S."/>
            <person name="Pandian R."/>
            <person name="Parker D."/>
            <person name="Parrish J."/>
            <person name="Pasternak S."/>
            <person name="Patel D."/>
            <person name="Pearce A.V."/>
            <person name="Pearson D.M."/>
            <person name="Pelan S.E."/>
            <person name="Perez L."/>
            <person name="Porter K.M."/>
            <person name="Ramsey Y."/>
            <person name="Reichwald K."/>
            <person name="Rhodes S."/>
            <person name="Ridler K.A."/>
            <person name="Schlessinger D."/>
            <person name="Schueler M.G."/>
            <person name="Sehra H.K."/>
            <person name="Shaw-Smith C."/>
            <person name="Shen H."/>
            <person name="Sheridan E.M."/>
            <person name="Shownkeen R."/>
            <person name="Skuce C.D."/>
            <person name="Smith M.L."/>
            <person name="Sotheran E.C."/>
            <person name="Steingruber H.E."/>
            <person name="Steward C.A."/>
            <person name="Storey R."/>
            <person name="Swann R.M."/>
            <person name="Swarbreck D."/>
            <person name="Tabor P.E."/>
            <person name="Taudien S."/>
            <person name="Taylor T."/>
            <person name="Teague B."/>
            <person name="Thomas K."/>
            <person name="Thorpe A."/>
            <person name="Timms K."/>
            <person name="Tracey A."/>
            <person name="Trevanion S."/>
            <person name="Tromans A.C."/>
            <person name="d'Urso M."/>
            <person name="Verduzco D."/>
            <person name="Villasana D."/>
            <person name="Waldron L."/>
            <person name="Wall M."/>
            <person name="Wang Q."/>
            <person name="Warren J."/>
            <person name="Warry G.L."/>
            <person name="Wei X."/>
            <person name="West A."/>
            <person name="Whitehead S.L."/>
            <person name="Whiteley M.N."/>
            <person name="Wilkinson J.E."/>
            <person name="Willey D.L."/>
            <person name="Williams G."/>
            <person name="Williams L."/>
            <person name="Williamson A."/>
            <person name="Williamson H."/>
            <person name="Wilming L."/>
            <person name="Woodmansey R.L."/>
            <person name="Wray P.W."/>
            <person name="Yen J."/>
            <person name="Zhang J."/>
            <person name="Zhou J."/>
            <person name="Zoghbi H."/>
            <person name="Zorilla S."/>
            <person name="Buck D."/>
            <person name="Reinhardt R."/>
            <person name="Poustka A."/>
            <person name="Rosenthal A."/>
            <person name="Lehrach H."/>
            <person name="Meindl A."/>
            <person name="Minx P.J."/>
            <person name="Hillier L.W."/>
            <person name="Willard H.F."/>
            <person name="Wilson R.K."/>
            <person name="Waterston R.H."/>
            <person name="Rice C.M."/>
            <person name="Vaudin M."/>
            <person name="Coulson A."/>
            <person name="Nelson D.L."/>
            <person name="Weinstock G."/>
            <person name="Sulston J.E."/>
            <person name="Durbin R.M."/>
            <person name="Hubbard T."/>
            <person name="Gibbs R.A."/>
            <person name="Beck S."/>
            <person name="Rogers J."/>
            <person name="Bentley D.R."/>
        </authorList>
    </citation>
    <scope>NUCLEOTIDE SEQUENCE [LARGE SCALE GENOMIC DNA]</scope>
</reference>
<reference key="7">
    <citation type="journal article" date="2004" name="Genome Res.">
        <title>The status, quality, and expansion of the NIH full-length cDNA project: the Mammalian Gene Collection (MGC).</title>
        <authorList>
            <consortium name="The MGC Project Team"/>
        </authorList>
    </citation>
    <scope>NUCLEOTIDE SEQUENCE [LARGE SCALE MRNA] (ISOFORM 1)</scope>
    <source>
        <tissue>Lung</tissue>
    </source>
</reference>
<reference key="8">
    <citation type="journal article" date="2000" name="Genomics">
        <title>Characterization of a highly complex region in Xq13 and mapping of three isodicentric breakpoints associated with preleukemia.</title>
        <authorList>
            <person name="McDonell N."/>
            <person name="Ramser J."/>
            <person name="Francis F."/>
            <person name="Vinet M.-C."/>
            <person name="Rider S."/>
            <person name="Sudbrak R."/>
            <person name="Riesselman L."/>
            <person name="Yaspo M.-L."/>
            <person name="Reinhardt R."/>
            <person name="Monaco A.P."/>
            <person name="Ross F."/>
            <person name="Kahn A."/>
            <person name="Kearney L."/>
            <person name="Buckle V."/>
            <person name="Chelly J."/>
        </authorList>
    </citation>
    <scope>NUCLEOTIDE SEQUENCE [MRNA] OF 1-247 (ISOFORM 1)</scope>
</reference>
<reference key="9">
    <citation type="submission" date="1999-12" db="EMBL/GenBank/DDBJ databases">
        <title>A novel gene expressed in human pheochromocytoma.</title>
        <authorList>
            <person name="Li Y."/>
            <person name="Huang Q."/>
            <person name="Peng Y."/>
            <person name="Song H."/>
            <person name="Yu Y."/>
            <person name="Xu S."/>
            <person name="Ren S."/>
            <person name="Chen Z."/>
            <person name="Han Z."/>
        </authorList>
    </citation>
    <scope>NUCLEOTIDE SEQUENCE [LARGE SCALE MRNA] OF 1-146 (ISOFORM 1)</scope>
    <source>
        <tissue>Pheochromocytoma</tissue>
    </source>
</reference>
<reference key="10">
    <citation type="journal article" date="2001" name="Mol. Cell. Biol.">
        <title>ETO, a target of t(8;21) in acute leukemia, makes distinct contacts with multiple histone deacetylases and binds mSin3A through its oligomerization domain.</title>
        <authorList>
            <person name="Amann J.M."/>
            <person name="Nip J."/>
            <person name="Strom D.K."/>
            <person name="Lutterbach B."/>
            <person name="Harada H."/>
            <person name="Lenny N."/>
            <person name="Downing J.R."/>
            <person name="Meyers S."/>
            <person name="Hiebert S.W."/>
        </authorList>
    </citation>
    <scope>INTERACTION WITH CBFA2T3</scope>
</reference>
<reference key="11">
    <citation type="journal article" date="2003" name="Mol. Cell. Biol.">
        <title>The inv(16) fusion protein associates with corepressors via a smooth muscle myosin heavy-chain domain.</title>
        <authorList>
            <person name="Durst K.L."/>
            <person name="Lutterbach B."/>
            <person name="Kummalue T."/>
            <person name="Friedman A.D."/>
            <person name="Hiebert S.W."/>
        </authorList>
    </citation>
    <scope>INTERACTION WITH PEPB2-MYH11 FUSION PROTEIN</scope>
</reference>
<reference key="12">
    <citation type="journal article" date="2004" name="Mol. Cell. Biol.">
        <title>Negative regulation of histone deacetylase 8 activity by cyclic AMP-dependent protein kinase A.</title>
        <authorList>
            <person name="Lee H."/>
            <person name="Rezai-Zadeh N."/>
            <person name="Seto E."/>
        </authorList>
    </citation>
    <scope>PHOSPHORYLATION BY PKA</scope>
    <scope>MUTAGENESIS OF SER-39</scope>
    <scope>FUNCTION</scope>
    <scope>TISSUE SPECIFICITY</scope>
    <scope>SUBCELLULAR LOCATION</scope>
</reference>
<reference key="13">
    <citation type="journal article" date="2005" name="FASEB J.">
        <title>Histone deacetylase HDAC8 associates with smooth muscle alpha-actin and is essential for smooth muscle cell contractility.</title>
        <authorList>
            <person name="Waltregny D."/>
            <person name="Glenisson W."/>
            <person name="Tran S.L."/>
            <person name="North B.J."/>
            <person name="Verdin E."/>
            <person name="Colige A."/>
            <person name="Castronovo V."/>
        </authorList>
    </citation>
    <scope>FUNCTION</scope>
    <scope>TISSUE SPECIFICITY</scope>
    <scope>SUBCELLULAR LOCATION</scope>
</reference>
<reference key="14">
    <citation type="journal article" date="2006" name="Am. J. Surg. Pathol.">
        <title>Use of histone deacetylase 8 (HDAC8), a new marker of smooth muscle differentiation, in the classification of mesenchymal tumors of the uterus.</title>
        <authorList>
            <person name="de Leval L."/>
            <person name="Waltregny D."/>
            <person name="Boniver J."/>
            <person name="Young R.H."/>
            <person name="Castronovo V."/>
            <person name="Oliva E."/>
        </authorList>
    </citation>
    <scope>TISSUE SPECIFICITY</scope>
    <scope>SUBCELLULAR LOCATION</scope>
</reference>
<reference key="15">
    <citation type="journal article" date="2006" name="Mol. Cell. Biol.">
        <title>Histone deacetylase 8 safeguards the human ever-shorter telomeres 1B (hEST1B) protein from ubiquitin-mediated degradation.</title>
        <authorList>
            <person name="Lee H."/>
            <person name="Sengupta N."/>
            <person name="Villagra A."/>
            <person name="Rezai-Zadeh N."/>
            <person name="Seto E."/>
        </authorList>
    </citation>
    <scope>INTERACTION WITH SMG5</scope>
</reference>
<reference key="16">
    <citation type="journal article" date="2012" name="J. Med. Genet.">
        <title>X-exome sequencing identifies a HDAC8 variant in a large pedigree with X-linked intellectual disability, truncal obesity, gynaecomastia, hypogonadism and unusual face.</title>
        <authorList>
            <person name="Harakalova M."/>
            <person name="van den Boogaard M.J."/>
            <person name="Sinke R."/>
            <person name="van Lieshout S."/>
            <person name="van Tuil M.C."/>
            <person name="Duran K."/>
            <person name="Renkens I."/>
            <person name="Terhal P.A."/>
            <person name="de Kovel C."/>
            <person name="Nijman I.J."/>
            <person name="van Haelst M."/>
            <person name="Knoers N.V."/>
            <person name="van Haaften G."/>
            <person name="Kloosterman W."/>
            <person name="Hennekam R.C."/>
            <person name="Cuppen E."/>
            <person name="Ploos van Amstel H.K."/>
        </authorList>
    </citation>
    <scope>INVOLVEMENT IN CDLS5</scope>
</reference>
<reference key="17">
    <citation type="journal article" date="2012" name="Nature">
        <title>HDAC8 mutations in Cornelia de Lange syndrome affect the cohesin acetylation cycle.</title>
        <authorList>
            <person name="Deardorff M.A."/>
            <person name="Bando M."/>
            <person name="Nakato R."/>
            <person name="Watrin E."/>
            <person name="Itoh T."/>
            <person name="Minamino M."/>
            <person name="Saitoh K."/>
            <person name="Komata M."/>
            <person name="Katou Y."/>
            <person name="Clark D."/>
            <person name="Cole K.E."/>
            <person name="De Baere E."/>
            <person name="Decroos C."/>
            <person name="Di Donato N."/>
            <person name="Ernst S."/>
            <person name="Francey L.J."/>
            <person name="Gyftodimou Y."/>
            <person name="Hirashima K."/>
            <person name="Hullings M."/>
            <person name="Ishikawa Y."/>
            <person name="Jaulin C."/>
            <person name="Kaur M."/>
            <person name="Kiyono T."/>
            <person name="Lombardi P.M."/>
            <person name="Magnaghi-Jaulin L."/>
            <person name="Mortier G.R."/>
            <person name="Nozaki N."/>
            <person name="Petersen M.B."/>
            <person name="Seimiya H."/>
            <person name="Siu V.M."/>
            <person name="Suzuki Y."/>
            <person name="Takagaki K."/>
            <person name="Wilde J.J."/>
            <person name="Willems P.J."/>
            <person name="Prigent C."/>
            <person name="Gillessen-Kaesbach G."/>
            <person name="Christianson D.W."/>
            <person name="Kaiser F.J."/>
            <person name="Jackson L.G."/>
            <person name="Hirota T."/>
            <person name="Krantz I.D."/>
            <person name="Shirahige K."/>
        </authorList>
    </citation>
    <scope>FUNCTION</scope>
    <scope>CATALYTIC ACTIVITY</scope>
    <scope>VARIANTS CDLS5 ARG-180; MET-311; ARG-320 AND ARG-334</scope>
</reference>
<reference key="18">
    <citation type="journal article" date="2017" name="Cell Res.">
        <title>Class I histone deacetylases are major histone decrotonylases: evidence for critical and broad function of histone crotonylation in transcription.</title>
        <authorList>
            <person name="Wei W."/>
            <person name="Liu X."/>
            <person name="Chen J."/>
            <person name="Gao S."/>
            <person name="Lu L."/>
            <person name="Zhang H."/>
            <person name="Ding G."/>
            <person name="Wang Z."/>
            <person name="Chen Z."/>
            <person name="Shi T."/>
            <person name="Li J."/>
            <person name="Yu J."/>
            <person name="Wong J."/>
        </authorList>
    </citation>
    <scope>FUNCTION</scope>
    <scope>CATALYTIC ACTIVITY</scope>
</reference>
<reference key="19">
    <citation type="journal article" date="2004" name="Structure">
        <title>Structural snapshots of human HDAC8 provide insights into the class I histone deacetylases.</title>
        <authorList>
            <person name="Somoza J.R."/>
            <person name="Skene R.J."/>
            <person name="Katz B.A."/>
            <person name="Mol C."/>
            <person name="Ho J.D."/>
            <person name="Jennings A.J."/>
            <person name="Luong C."/>
            <person name="Arvai A."/>
            <person name="Buggy J.J."/>
            <person name="Chi E."/>
            <person name="Tang J."/>
            <person name="Sang B.-C."/>
            <person name="Verner E."/>
            <person name="Wynands R."/>
            <person name="Leahy E.M."/>
            <person name="Dougan D.R."/>
            <person name="Snell G."/>
            <person name="Navre M."/>
            <person name="Knuth M.W."/>
            <person name="Swanson R.V."/>
            <person name="McRee D.E."/>
            <person name="Tari L.W."/>
        </authorList>
    </citation>
    <scope>X-RAY CRYSTALLOGRAPHY (1.9 ANGSTROMS) IN COMPLEXES WITH TSA; SAHA; MS-344; CRA-A AND DIVALENT METAL CATION</scope>
    <scope>COFACTOR</scope>
    <scope>ACTIVITY REGULATION</scope>
    <scope>PHOSPHORYLATION AT SER-39</scope>
</reference>
<reference key="20">
    <citation type="journal article" date="2007" name="EMBO Rep.">
        <title>Substrate binding to histone deacetylases as shown by the crystal structure of the HDAC8-substrate complex.</title>
        <authorList>
            <person name="Vannini A."/>
            <person name="Volpari C."/>
            <person name="Gallinari P."/>
            <person name="Jones P."/>
            <person name="Mattu M."/>
            <person name="Carfi A."/>
            <person name="De Francesco R."/>
            <person name="Steinkuehler C."/>
            <person name="Di Marco S."/>
        </authorList>
    </citation>
    <scope>X-RAY CRYSTALLOGRAPHY (2.25 ANGSTROMS) IN COMPLEX WITH DIVALENT METAL CATION</scope>
    <scope>MUTAGENESIS OF ASP-101 AND TYR-306</scope>
</reference>
<reference key="21">
    <citation type="journal article" date="2008" name="Biochemistry">
        <title>Structural studies of human histone deacetylase 8 and its site-specific variants complexed with substrate and inhibitors.</title>
        <authorList>
            <person name="Dowling D.P."/>
            <person name="Gantt S.L."/>
            <person name="Gattis S.G."/>
            <person name="Fierke C.A."/>
            <person name="Christianson D.W."/>
        </authorList>
    </citation>
    <scope>X-RAY CRYSTALLOGRAPHY (2.31 ANGSTROMS) IN COMPLEXES WITH PEPTIDE SUBSTRATE; SAHA; TSA; M-344 AND APHA</scope>
    <scope>ACTIVE SITE</scope>
    <scope>MUTAGENESIS OF ASP-101 AND HIS-143</scope>
</reference>
<comment type="function">
    <text evidence="1 2 3 6 8 13 15">Histone deacetylase that catalyzes the deacetylation of lysine residues on the N-terminal part of the core histones (H2A, H2B, H3 and H4) (PubMed:10748112, PubMed:10922473, PubMed:10926844, PubMed:14701748, PubMed:28497810). Histone deacetylation gives a tag for epigenetic repression and plays an important role in transcriptional regulation, cell cycle progression and developmental events (PubMed:10748112, PubMed:10922473, PubMed:10926844, PubMed:14701748). Histone deacetylases act via the formation of large multiprotein complexes (PubMed:10748112, PubMed:10922473, PubMed:10926844, PubMed:14701748). Also involved in the deacetylation of cohesin complex protein SMC3 regulating release of cohesin complexes from chromatin (PubMed:22885700). May play a role in smooth muscle cell contractility (PubMed:15772115). In addition to protein deacetylase activity, also has protein-lysine deacylase activity: acts as a protein decrotonylase by mediating decrotonylation ((2E)-butenoyl) of histones (PubMed:28497810).</text>
</comment>
<comment type="catalytic activity">
    <reaction evidence="1 2 3 15">
        <text>N(6)-acetyl-L-lysyl-[histone] + H2O = L-lysyl-[histone] + acetate</text>
        <dbReference type="Rhea" id="RHEA:58196"/>
        <dbReference type="Rhea" id="RHEA-COMP:9845"/>
        <dbReference type="Rhea" id="RHEA-COMP:11338"/>
        <dbReference type="ChEBI" id="CHEBI:15377"/>
        <dbReference type="ChEBI" id="CHEBI:29969"/>
        <dbReference type="ChEBI" id="CHEBI:30089"/>
        <dbReference type="ChEBI" id="CHEBI:61930"/>
        <dbReference type="EC" id="3.5.1.98"/>
    </reaction>
    <physiologicalReaction direction="left-to-right" evidence="1 2 3 15">
        <dbReference type="Rhea" id="RHEA:58197"/>
    </physiologicalReaction>
</comment>
<comment type="catalytic activity">
    <reaction evidence="21">
        <text>N(6)-acetyl-L-lysyl-[protein] + H2O = L-lysyl-[protein] + acetate</text>
        <dbReference type="Rhea" id="RHEA:58108"/>
        <dbReference type="Rhea" id="RHEA-COMP:9752"/>
        <dbReference type="Rhea" id="RHEA-COMP:10731"/>
        <dbReference type="ChEBI" id="CHEBI:15377"/>
        <dbReference type="ChEBI" id="CHEBI:29969"/>
        <dbReference type="ChEBI" id="CHEBI:30089"/>
        <dbReference type="ChEBI" id="CHEBI:61930"/>
    </reaction>
    <physiologicalReaction direction="left-to-right" evidence="21">
        <dbReference type="Rhea" id="RHEA:58109"/>
    </physiologicalReaction>
</comment>
<comment type="catalytic activity">
    <reaction evidence="15">
        <text>N(6)-(2E)-butenoyl-L-lysyl-[protein] + H2O = (2E)-2-butenoate + L-lysyl-[protein]</text>
        <dbReference type="Rhea" id="RHEA:69172"/>
        <dbReference type="Rhea" id="RHEA-COMP:9752"/>
        <dbReference type="Rhea" id="RHEA-COMP:13707"/>
        <dbReference type="ChEBI" id="CHEBI:15377"/>
        <dbReference type="ChEBI" id="CHEBI:29969"/>
        <dbReference type="ChEBI" id="CHEBI:35899"/>
        <dbReference type="ChEBI" id="CHEBI:137954"/>
    </reaction>
    <physiologicalReaction direction="left-to-right" evidence="15">
        <dbReference type="Rhea" id="RHEA:69173"/>
    </physiologicalReaction>
</comment>
<comment type="cofactor">
    <cofactor evidence="7">
        <name>a divalent metal cation</name>
        <dbReference type="ChEBI" id="CHEBI:60240"/>
    </cofactor>
    <text evidence="7">Binds 1 divalent metal cation per subunit.</text>
</comment>
<comment type="activity regulation">
    <text evidence="7">Its activity is inhibited by trichostatin A (TSA), suberoylanilide hydroxamic acid (SAHA), 3-(1-methyl-4-phenylacetyl-1H-2-pyrrolyl)-N-hydroxy-2-propenamide (APHA), 4-dimethylamino-N-(6-hydroxycarbamoyethyl)benzamide-N-hydroxy-7-(4-dimethylaminobenzoyl)aminoheptanamide (MS-344), 5-(4-methyl-benzoylamino)-biphenyl-3,4'-dicarboxylic acid 3-dimethylamide 4'-hydroxyamide (CRA-A) and butyrate.</text>
</comment>
<comment type="subunit">
    <text evidence="4 5 8 10">Interacts with PEPB2-MYH11, a fusion protein consisting of the 165 N-terminal residues of CBF-beta (PEPB2) with the tail region of MYH11 produced by the inversion Inv(16)(p13q22), a translocation associated with acute myeloid leukemia of M4EO subtype (PubMed:12509458). The PEPB2-MYH1 fusion protein also interacts with RUNX1, a well known transcriptional regulator, suggesting that the interaction with HDAC8 may participate in the conversion of RUNX1 into a constitutive transcriptional repressor (PubMed:12509458). Interacts with CBFA2T3 (PubMed:11533236). Interacts with phosphorylated SMG5/EST1B; this interaction protects SMG5 from ubiquitin-mediated degradation (PubMed:16809764). Associates with alpha-SMA (smooth muscle alpha-actin) (PubMed:15772115).</text>
</comment>
<comment type="subcellular location">
    <subcellularLocation>
        <location evidence="1 6">Nucleus</location>
    </subcellularLocation>
    <subcellularLocation>
        <location evidence="1">Chromosome</location>
    </subcellularLocation>
    <subcellularLocation>
        <location evidence="8 9">Cytoplasm</location>
    </subcellularLocation>
    <text evidence="1 8 9">Excluded from the nucleoli (PubMed:10748112). Found in the cytoplasm of cells showing smooth muscle differentiation (PubMed:15772115, PubMed:16538051).</text>
</comment>
<comment type="alternative products">
    <event type="alternative splicing"/>
    <isoform>
        <id>Q9BY41-1</id>
        <name>1</name>
        <sequence type="displayed"/>
    </isoform>
    <isoform>
        <id>Q9BY41-4</id>
        <name>4</name>
        <sequence type="described" ref="VSP_043426"/>
    </isoform>
    <isoform>
        <id>Q9BY41-5</id>
        <name>5</name>
        <sequence type="described" ref="VSP_043427 VSP_007177"/>
    </isoform>
    <isoform>
        <id>Q9BY41-6</id>
        <name>6</name>
        <sequence type="described" ref="VSP_043426 VSP_046834 VSP_046835 VSP_046836"/>
    </isoform>
    <isoform>
        <id>Q9BY41-7</id>
        <name>7</name>
        <sequence type="described" ref="VSP_046832 VSP_046833"/>
    </isoform>
    <isoform>
        <id>Q9BY41-8</id>
        <name>8</name>
        <sequence type="described" ref="VSP_047502"/>
    </isoform>
</comment>
<comment type="tissue specificity">
    <text evidence="3 6 8 9">Weakly expressed in most tissues. Expressed at higher level in heart, brain, kidney and pancreas and also in liver, lung, placenta, prostate and kidney.</text>
</comment>
<comment type="PTM">
    <text evidence="6 7">Phosphorylated by PKA on serine 39. Phosphorylation reduces deacetylase activity observed preferentially on histones H3 and H4.</text>
</comment>
<comment type="disease" evidence="13 14">
    <disease id="DI-03541">
        <name>Cornelia de Lange syndrome 5</name>
        <acronym>CDLS5</acronym>
        <description>A form of Cornelia de Lange syndrome, a clinically heterogeneous developmental disorder associated with malformations affecting multiple systems. It is characterized by facial dysmorphisms, abnormal hands and feet, growth delay, cognitive retardation, hirsutism, gastroesophageal dysfunction and cardiac, ophthalmologic and genitourinary anomalies.</description>
        <dbReference type="MIM" id="300882"/>
    </disease>
    <text>The disease is caused by variants affecting the gene represented in this entry.</text>
</comment>
<comment type="similarity">
    <text evidence="20">Belongs to the histone deacetylase family. HD type 1 subfamily.</text>
</comment>
<comment type="sequence caution" evidence="20">
    <conflict type="miscellaneous discrepancy">
        <sequence resource="EMBL-CDS" id="AAK14930"/>
    </conflict>
    <text>Aberrant splicing.</text>
</comment>
<name>HDAC8_HUMAN</name>
<feature type="chain" id="PRO_0000114708" description="Histone deacetylase 8">
    <location>
        <begin position="1"/>
        <end position="377"/>
    </location>
</feature>
<feature type="region of interest" description="Histone deacetylase">
    <location>
        <begin position="14"/>
        <end position="324"/>
    </location>
</feature>
<feature type="active site" description="Proton acceptor" evidence="12">
    <location>
        <position position="143"/>
    </location>
</feature>
<feature type="binding site" evidence="12">
    <location>
        <position position="101"/>
    </location>
    <ligand>
        <name>substrate</name>
    </ligand>
</feature>
<feature type="binding site" evidence="12">
    <location>
        <position position="151"/>
    </location>
    <ligand>
        <name>substrate</name>
    </ligand>
</feature>
<feature type="binding site" evidence="11">
    <location>
        <position position="178"/>
    </location>
    <ligand>
        <name>a divalent metal cation</name>
        <dbReference type="ChEBI" id="CHEBI:60240"/>
    </ligand>
</feature>
<feature type="binding site" evidence="11">
    <location>
        <position position="180"/>
    </location>
    <ligand>
        <name>a divalent metal cation</name>
        <dbReference type="ChEBI" id="CHEBI:60240"/>
    </ligand>
</feature>
<feature type="binding site" evidence="11">
    <location>
        <position position="267"/>
    </location>
    <ligand>
        <name>a divalent metal cation</name>
        <dbReference type="ChEBI" id="CHEBI:60240"/>
    </ligand>
</feature>
<feature type="binding site" evidence="12">
    <location>
        <position position="306"/>
    </location>
    <ligand>
        <name>substrate</name>
    </ligand>
</feature>
<feature type="modified residue" description="Phosphoserine" evidence="7">
    <location>
        <position position="39"/>
    </location>
</feature>
<feature type="splice variant" id="VSP_043426" description="In isoform 4 and isoform 6." evidence="18">
    <location>
        <begin position="56"/>
        <end position="146"/>
    </location>
</feature>
<feature type="splice variant" id="VSP_047502" description="In isoform 8." evidence="19">
    <location>
        <begin position="147"/>
        <end position="377"/>
    </location>
</feature>
<feature type="splice variant" id="VSP_046832" description="In isoform 7." evidence="20">
    <original>DEASGFCYLNDA</original>
    <variation>ETCVYVALYKAF</variation>
    <location>
        <begin position="147"/>
        <end position="158"/>
    </location>
</feature>
<feature type="splice variant" id="VSP_046833" description="In isoform 7." evidence="20">
    <location>
        <begin position="159"/>
        <end position="377"/>
    </location>
</feature>
<feature type="splice variant" id="VSP_046834" description="In isoform 6." evidence="20">
    <location>
        <begin position="185"/>
        <end position="210"/>
    </location>
</feature>
<feature type="splice variant" id="VSP_043427" description="In isoform 5." evidence="18">
    <original>SVLKEVYQAFNPKAVVLQLGADTIAGD</original>
    <variation>RYEPPAPNPGL</variation>
    <location>
        <begin position="246"/>
        <end position="272"/>
    </location>
</feature>
<feature type="splice variant" id="VSP_046835" description="In isoform 6." evidence="20">
    <original>SVLKEVYQAFN</original>
    <variation>RYEPPAPNPGL</variation>
    <location>
        <begin position="246"/>
        <end position="256"/>
    </location>
</feature>
<feature type="splice variant" id="VSP_046836" description="In isoform 6." evidence="20">
    <location>
        <begin position="257"/>
        <end position="377"/>
    </location>
</feature>
<feature type="splice variant" id="VSP_007177" description="In isoform 5." evidence="18">
    <location>
        <begin position="273"/>
        <end position="377"/>
    </location>
</feature>
<feature type="sequence variant" id="VAR_069140" description="In CDLS5; dbSNP:rs397515416." evidence="13">
    <original>H</original>
    <variation>R</variation>
    <location>
        <position position="180"/>
    </location>
</feature>
<feature type="sequence variant" id="VAR_069141" description="In CDLS5; dbSNP:rs397515417." evidence="13">
    <original>T</original>
    <variation>M</variation>
    <location>
        <position position="311"/>
    </location>
</feature>
<feature type="sequence variant" id="VAR_069142" description="In CDLS5; dbSNP:rs398122909." evidence="13">
    <original>G</original>
    <variation>R</variation>
    <location>
        <position position="320"/>
    </location>
</feature>
<feature type="sequence variant" id="VAR_069143" description="In CDLS5; dbSNP:rs397515418." evidence="13">
    <original>H</original>
    <variation>R</variation>
    <location>
        <position position="334"/>
    </location>
</feature>
<feature type="mutagenesis site" description="Enhances the deacetylase activity." evidence="6">
    <original>S</original>
    <variation>A</variation>
    <location>
        <position position="39"/>
    </location>
</feature>
<feature type="mutagenesis site" description="Decreases the deacetylase activity." evidence="6">
    <original>S</original>
    <variation>E</variation>
    <location>
        <position position="39"/>
    </location>
</feature>
<feature type="mutagenesis site" description="Complete loss of catalytical activity. Complete loss of catalytical activity; when associated with F-306." evidence="11 12">
    <original>D</original>
    <variation>A</variation>
    <location>
        <position position="101"/>
    </location>
</feature>
<feature type="mutagenesis site" description="Partial loss of catalytical activity." evidence="11 12">
    <original>D</original>
    <variation>E</variation>
    <location>
        <position position="101"/>
    </location>
</feature>
<feature type="mutagenesis site" description="Complete loss of catalytical activity." evidence="11 12">
    <original>D</original>
    <variation>L</variation>
    <location>
        <position position="101"/>
    </location>
</feature>
<feature type="mutagenesis site" description="Almost complete loss of catalytical activity." evidence="11 12">
    <original>D</original>
    <variation>N</variation>
    <location>
        <position position="101"/>
    </location>
</feature>
<feature type="mutagenesis site" description="Strongly reduces histone deacetylase activity." evidence="3">
    <original>HH</original>
    <variation>AA</variation>
    <location>
        <begin position="142"/>
        <end position="143"/>
    </location>
</feature>
<feature type="mutagenesis site" description="Loss of catalytic activity." evidence="12">
    <original>H</original>
    <variation>A</variation>
    <location>
        <position position="143"/>
    </location>
</feature>
<feature type="mutagenesis site" description="Loss of catalytic activity. Complete loss of catalytic activity; when associated with A-101." evidence="11">
    <original>Y</original>
    <variation>F</variation>
    <location>
        <position position="306"/>
    </location>
</feature>
<feature type="sequence conflict" description="In Ref. 7; AAH50433." evidence="20" ref="7">
    <original>L</original>
    <variation>P</variation>
    <location>
        <position position="31"/>
    </location>
</feature>
<feature type="sequence conflict" description="In Ref. 8; no nucleotide entry." evidence="20" ref="8">
    <original>L</original>
    <variation>V</variation>
    <location>
        <position position="179"/>
    </location>
</feature>
<feature type="sequence conflict" description="In Ref. 2; AAF73428." evidence="20" ref="2">
    <original>R</original>
    <variation>W</variation>
    <location>
        <position position="223"/>
    </location>
</feature>
<feature type="strand" evidence="30">
    <location>
        <begin position="17"/>
        <end position="19"/>
    </location>
</feature>
<feature type="helix" evidence="30">
    <location>
        <begin position="22"/>
        <end position="28"/>
    </location>
</feature>
<feature type="turn" evidence="27">
    <location>
        <begin position="29"/>
        <end position="31"/>
    </location>
</feature>
<feature type="strand" evidence="25">
    <location>
        <begin position="32"/>
        <end position="34"/>
    </location>
</feature>
<feature type="helix" evidence="30">
    <location>
        <begin position="37"/>
        <end position="47"/>
    </location>
</feature>
<feature type="helix" evidence="30">
    <location>
        <begin position="50"/>
        <end position="53"/>
    </location>
</feature>
<feature type="strand" evidence="30">
    <location>
        <begin position="54"/>
        <end position="57"/>
    </location>
</feature>
<feature type="helix" evidence="30">
    <location>
        <begin position="64"/>
        <end position="67"/>
    </location>
</feature>
<feature type="turn" evidence="30">
    <location>
        <begin position="68"/>
        <end position="70"/>
    </location>
</feature>
<feature type="helix" evidence="30">
    <location>
        <begin position="73"/>
        <end position="84"/>
    </location>
</feature>
<feature type="strand" evidence="26">
    <location>
        <begin position="87"/>
        <end position="89"/>
    </location>
</feature>
<feature type="turn" evidence="29">
    <location>
        <begin position="91"/>
        <end position="97"/>
    </location>
</feature>
<feature type="strand" evidence="30">
    <location>
        <begin position="99"/>
        <end position="102"/>
    </location>
</feature>
<feature type="helix" evidence="30">
    <location>
        <begin position="108"/>
        <end position="127"/>
    </location>
</feature>
<feature type="strand" evidence="24">
    <location>
        <begin position="128"/>
        <end position="130"/>
    </location>
</feature>
<feature type="strand" evidence="30">
    <location>
        <begin position="132"/>
        <end position="136"/>
    </location>
</feature>
<feature type="strand" evidence="30">
    <location>
        <begin position="153"/>
        <end position="155"/>
    </location>
</feature>
<feature type="helix" evidence="30">
    <location>
        <begin position="157"/>
        <end position="165"/>
    </location>
</feature>
<feature type="turn" evidence="30">
    <location>
        <begin position="166"/>
        <end position="168"/>
    </location>
</feature>
<feature type="strand" evidence="30">
    <location>
        <begin position="172"/>
        <end position="176"/>
    </location>
</feature>
<feature type="strand" evidence="30">
    <location>
        <begin position="178"/>
        <end position="180"/>
    </location>
</feature>
<feature type="helix" evidence="30">
    <location>
        <begin position="183"/>
        <end position="188"/>
    </location>
</feature>
<feature type="turn" evidence="30">
    <location>
        <begin position="189"/>
        <end position="191"/>
    </location>
</feature>
<feature type="strand" evidence="30">
    <location>
        <begin position="193"/>
        <end position="202"/>
    </location>
</feature>
<feature type="strand" evidence="23">
    <location>
        <begin position="207"/>
        <end position="209"/>
    </location>
</feature>
<feature type="helix" evidence="30">
    <location>
        <begin position="220"/>
        <end position="222"/>
    </location>
</feature>
<feature type="strand" evidence="30">
    <location>
        <begin position="225"/>
        <end position="231"/>
    </location>
</feature>
<feature type="helix" evidence="30">
    <location>
        <begin position="237"/>
        <end position="255"/>
    </location>
</feature>
<feature type="strand" evidence="30">
    <location>
        <begin position="258"/>
        <end position="263"/>
    </location>
</feature>
<feature type="helix" evidence="30">
    <location>
        <begin position="266"/>
        <end position="268"/>
    </location>
</feature>
<feature type="helix" evidence="30">
    <location>
        <begin position="281"/>
        <end position="292"/>
    </location>
</feature>
<feature type="strand" evidence="30">
    <location>
        <begin position="297"/>
        <end position="301"/>
    </location>
</feature>
<feature type="helix" evidence="30">
    <location>
        <begin position="308"/>
        <end position="323"/>
    </location>
</feature>
<feature type="helix" evidence="30">
    <location>
        <begin position="337"/>
        <end position="340"/>
    </location>
</feature>
<feature type="turn" evidence="30">
    <location>
        <begin position="341"/>
        <end position="343"/>
    </location>
</feature>
<feature type="helix" evidence="30">
    <location>
        <begin position="359"/>
        <end position="372"/>
    </location>
</feature>
<feature type="turn" evidence="28">
    <location>
        <begin position="374"/>
        <end position="376"/>
    </location>
</feature>
<protein>
    <recommendedName>
        <fullName evidence="16 17">Histone deacetylase 8</fullName>
        <shortName>HD8</shortName>
        <ecNumber evidence="1 2 3">3.5.1.98</ecNumber>
    </recommendedName>
    <alternativeName>
        <fullName>Protein deacetylase HDAC8</fullName>
        <ecNumber evidence="13">3.5.1.-</ecNumber>
    </alternativeName>
    <alternativeName>
        <fullName evidence="20">Protein decrotonylase HDAC8</fullName>
        <ecNumber evidence="15">3.5.1.-</ecNumber>
    </alternativeName>
</protein>
<dbReference type="EC" id="3.5.1.98" evidence="1 2 3"/>
<dbReference type="EC" id="3.5.1.-" evidence="13 15"/>
<dbReference type="EMBL" id="AF230097">
    <property type="protein sequence ID" value="AAF73076.1"/>
    <property type="molecule type" value="mRNA"/>
</dbReference>
<dbReference type="EMBL" id="AF245664">
    <property type="protein sequence ID" value="AAF73428.1"/>
    <property type="molecule type" value="mRNA"/>
</dbReference>
<dbReference type="EMBL" id="AJ277724">
    <property type="protein sequence ID" value="CAB90213.1"/>
    <property type="molecule type" value="mRNA"/>
</dbReference>
<dbReference type="EMBL" id="BQ189619">
    <property type="status" value="NOT_ANNOTATED_CDS"/>
    <property type="molecule type" value="mRNA"/>
</dbReference>
<dbReference type="EMBL" id="AK296641">
    <property type="protein sequence ID" value="BAG59242.1"/>
    <property type="molecule type" value="mRNA"/>
</dbReference>
<dbReference type="EMBL" id="AK300895">
    <property type="protein sequence ID" value="BAG62534.1"/>
    <property type="molecule type" value="mRNA"/>
</dbReference>
<dbReference type="EMBL" id="AA376331">
    <property type="status" value="NOT_ANNOTATED_CDS"/>
    <property type="molecule type" value="mRNA"/>
</dbReference>
<dbReference type="EMBL" id="AI159768">
    <property type="status" value="NOT_ANNOTATED_CDS"/>
    <property type="molecule type" value="mRNA"/>
</dbReference>
<dbReference type="EMBL" id="T99283">
    <property type="status" value="NOT_ANNOTATED_CDS"/>
    <property type="molecule type" value="mRNA"/>
</dbReference>
<dbReference type="EMBL" id="AF212246">
    <property type="protein sequence ID" value="AAK14930.1"/>
    <property type="status" value="ALT_SEQ"/>
    <property type="molecule type" value="mRNA"/>
</dbReference>
<dbReference type="EMBL" id="AL133500">
    <property type="status" value="NOT_ANNOTATED_CDS"/>
    <property type="molecule type" value="Genomic_DNA"/>
</dbReference>
<dbReference type="EMBL" id="BX295542">
    <property type="status" value="NOT_ANNOTATED_CDS"/>
    <property type="molecule type" value="Genomic_DNA"/>
</dbReference>
<dbReference type="EMBL" id="BC050433">
    <property type="protein sequence ID" value="AAH50433.1"/>
    <property type="molecule type" value="mRNA"/>
</dbReference>
<dbReference type="CCDS" id="CCDS14420.1">
    <molecule id="Q9BY41-1"/>
</dbReference>
<dbReference type="CCDS" id="CCDS55448.1">
    <molecule id="Q9BY41-6"/>
</dbReference>
<dbReference type="CCDS" id="CCDS55449.1">
    <molecule id="Q9BY41-4"/>
</dbReference>
<dbReference type="CCDS" id="CCDS55450.1">
    <molecule id="Q9BY41-8"/>
</dbReference>
<dbReference type="CCDS" id="CCDS55451.1">
    <molecule id="Q9BY41-5"/>
</dbReference>
<dbReference type="CCDS" id="CCDS55452.1">
    <molecule id="Q9BY41-7"/>
</dbReference>
<dbReference type="RefSeq" id="NP_001159890.1">
    <molecule id="Q9BY41-4"/>
    <property type="nucleotide sequence ID" value="NM_001166418.2"/>
</dbReference>
<dbReference type="RefSeq" id="NP_001159891.1">
    <molecule id="Q9BY41-5"/>
    <property type="nucleotide sequence ID" value="NM_001166419.2"/>
</dbReference>
<dbReference type="RefSeq" id="NP_001159892.1">
    <molecule id="Q9BY41-8"/>
    <property type="nucleotide sequence ID" value="NM_001166420.2"/>
</dbReference>
<dbReference type="RefSeq" id="NP_001159894.1">
    <molecule id="Q9BY41-7"/>
    <property type="nucleotide sequence ID" value="NM_001166422.2"/>
</dbReference>
<dbReference type="RefSeq" id="NP_001159920.1">
    <molecule id="Q9BY41-6"/>
    <property type="nucleotide sequence ID" value="NM_001166448.2"/>
</dbReference>
<dbReference type="RefSeq" id="NP_060956.1">
    <molecule id="Q9BY41-1"/>
    <property type="nucleotide sequence ID" value="NM_018486.3"/>
</dbReference>
<dbReference type="PDB" id="1T64">
    <property type="method" value="X-ray"/>
    <property type="resolution" value="1.90 A"/>
    <property type="chains" value="A/B=1-377"/>
</dbReference>
<dbReference type="PDB" id="1T67">
    <property type="method" value="X-ray"/>
    <property type="resolution" value="2.31 A"/>
    <property type="chains" value="A=1-377"/>
</dbReference>
<dbReference type="PDB" id="1T69">
    <property type="method" value="X-ray"/>
    <property type="resolution" value="2.91 A"/>
    <property type="chains" value="A=1-377"/>
</dbReference>
<dbReference type="PDB" id="1VKG">
    <property type="method" value="X-ray"/>
    <property type="resolution" value="2.20 A"/>
    <property type="chains" value="A/B=1-377"/>
</dbReference>
<dbReference type="PDB" id="1W22">
    <property type="method" value="X-ray"/>
    <property type="resolution" value="2.50 A"/>
    <property type="chains" value="A/B=1-377"/>
</dbReference>
<dbReference type="PDB" id="2V5W">
    <property type="method" value="X-ray"/>
    <property type="resolution" value="2.00 A"/>
    <property type="chains" value="A/B=1-377"/>
</dbReference>
<dbReference type="PDB" id="2V5X">
    <property type="method" value="X-ray"/>
    <property type="resolution" value="2.25 A"/>
    <property type="chains" value="A/B=1-377"/>
</dbReference>
<dbReference type="PDB" id="3EW8">
    <property type="method" value="X-ray"/>
    <property type="resolution" value="1.80 A"/>
    <property type="chains" value="A=1-377"/>
</dbReference>
<dbReference type="PDB" id="3EWF">
    <property type="method" value="X-ray"/>
    <property type="resolution" value="2.50 A"/>
    <property type="chains" value="A/B/C/D=1-377"/>
</dbReference>
<dbReference type="PDB" id="3EZP">
    <property type="method" value="X-ray"/>
    <property type="resolution" value="2.65 A"/>
    <property type="chains" value="A/B=1-377"/>
</dbReference>
<dbReference type="PDB" id="3EZT">
    <property type="method" value="X-ray"/>
    <property type="resolution" value="2.85 A"/>
    <property type="chains" value="A/B=1-377"/>
</dbReference>
<dbReference type="PDB" id="3F06">
    <property type="method" value="X-ray"/>
    <property type="resolution" value="2.55 A"/>
    <property type="chains" value="A/B=1-377"/>
</dbReference>
<dbReference type="PDB" id="3F07">
    <property type="method" value="X-ray"/>
    <property type="resolution" value="3.30 A"/>
    <property type="chains" value="A/B/C=1-377"/>
</dbReference>
<dbReference type="PDB" id="3F0R">
    <property type="method" value="X-ray"/>
    <property type="resolution" value="2.54 A"/>
    <property type="chains" value="A/B/C=1-377"/>
</dbReference>
<dbReference type="PDB" id="3MZ3">
    <property type="method" value="X-ray"/>
    <property type="resolution" value="3.20 A"/>
    <property type="chains" value="A/B=1-377"/>
</dbReference>
<dbReference type="PDB" id="3MZ4">
    <property type="method" value="X-ray"/>
    <property type="resolution" value="1.84 A"/>
    <property type="chains" value="A/B=1-377"/>
</dbReference>
<dbReference type="PDB" id="3MZ6">
    <property type="method" value="X-ray"/>
    <property type="resolution" value="2.00 A"/>
    <property type="chains" value="A=1-377"/>
</dbReference>
<dbReference type="PDB" id="3MZ7">
    <property type="method" value="X-ray"/>
    <property type="resolution" value="1.90 A"/>
    <property type="chains" value="A=1-377"/>
</dbReference>
<dbReference type="PDB" id="3RQD">
    <property type="method" value="X-ray"/>
    <property type="resolution" value="2.14 A"/>
    <property type="chains" value="A/B=1-377"/>
</dbReference>
<dbReference type="PDB" id="3SFF">
    <property type="method" value="X-ray"/>
    <property type="resolution" value="2.00 A"/>
    <property type="chains" value="A=1-377"/>
</dbReference>
<dbReference type="PDB" id="3SFH">
    <property type="method" value="X-ray"/>
    <property type="resolution" value="2.70 A"/>
    <property type="chains" value="A=1-377"/>
</dbReference>
<dbReference type="PDB" id="4QA0">
    <property type="method" value="X-ray"/>
    <property type="resolution" value="2.24 A"/>
    <property type="chains" value="A/B=1-377"/>
</dbReference>
<dbReference type="PDB" id="4QA1">
    <property type="method" value="X-ray"/>
    <property type="resolution" value="1.92 A"/>
    <property type="chains" value="A/B/C/D=1-377"/>
</dbReference>
<dbReference type="PDB" id="4QA2">
    <property type="method" value="X-ray"/>
    <property type="resolution" value="2.38 A"/>
    <property type="chains" value="A/B=1-377"/>
</dbReference>
<dbReference type="PDB" id="4QA3">
    <property type="method" value="X-ray"/>
    <property type="resolution" value="2.88 A"/>
    <property type="chains" value="A/B=1-377"/>
</dbReference>
<dbReference type="PDB" id="4QA4">
    <property type="method" value="X-ray"/>
    <property type="resolution" value="1.98 A"/>
    <property type="chains" value="A=1-377"/>
</dbReference>
<dbReference type="PDB" id="4QA5">
    <property type="method" value="X-ray"/>
    <property type="resolution" value="1.76 A"/>
    <property type="chains" value="A/B=1-377"/>
</dbReference>
<dbReference type="PDB" id="4QA6">
    <property type="method" value="X-ray"/>
    <property type="resolution" value="2.05 A"/>
    <property type="chains" value="A/B=1-377"/>
</dbReference>
<dbReference type="PDB" id="4QA7">
    <property type="method" value="X-ray"/>
    <property type="resolution" value="2.31 A"/>
    <property type="chains" value="A=1-377"/>
</dbReference>
<dbReference type="PDB" id="4RN0">
    <property type="method" value="X-ray"/>
    <property type="resolution" value="1.76 A"/>
    <property type="chains" value="A/B=1-377"/>
</dbReference>
<dbReference type="PDB" id="4RN1">
    <property type="method" value="X-ray"/>
    <property type="resolution" value="2.18 A"/>
    <property type="chains" value="A/B=1-377"/>
</dbReference>
<dbReference type="PDB" id="4RN2">
    <property type="method" value="X-ray"/>
    <property type="resolution" value="2.39 A"/>
    <property type="chains" value="A/B=1-377"/>
</dbReference>
<dbReference type="PDB" id="5BWZ">
    <property type="method" value="X-ray"/>
    <property type="resolution" value="1.59 A"/>
    <property type="chains" value="A/B=1-377"/>
</dbReference>
<dbReference type="PDB" id="5D1B">
    <property type="method" value="X-ray"/>
    <property type="resolution" value="2.90 A"/>
    <property type="chains" value="A/B=1-377"/>
</dbReference>
<dbReference type="PDB" id="5D1C">
    <property type="method" value="X-ray"/>
    <property type="resolution" value="1.42 A"/>
    <property type="chains" value="A/B=1-377"/>
</dbReference>
<dbReference type="PDB" id="5D1D">
    <property type="method" value="X-ray"/>
    <property type="resolution" value="2.01 A"/>
    <property type="chains" value="A/B=1-377"/>
</dbReference>
<dbReference type="PDB" id="5DC5">
    <property type="method" value="X-ray"/>
    <property type="resolution" value="1.94 A"/>
    <property type="chains" value="A/B=1-377"/>
</dbReference>
<dbReference type="PDB" id="5DC6">
    <property type="method" value="X-ray"/>
    <property type="resolution" value="1.55 A"/>
    <property type="chains" value="A/B=1-377"/>
</dbReference>
<dbReference type="PDB" id="5DC7">
    <property type="method" value="X-ray"/>
    <property type="resolution" value="2.30 A"/>
    <property type="chains" value="A/B=1-377"/>
</dbReference>
<dbReference type="PDB" id="5DC8">
    <property type="method" value="X-ray"/>
    <property type="resolution" value="1.30 A"/>
    <property type="chains" value="A/B=1-377"/>
</dbReference>
<dbReference type="PDB" id="5FCW">
    <property type="method" value="X-ray"/>
    <property type="resolution" value="1.98 A"/>
    <property type="chains" value="A/B=1-377"/>
</dbReference>
<dbReference type="PDB" id="5THS">
    <property type="method" value="X-ray"/>
    <property type="resolution" value="1.90 A"/>
    <property type="chains" value="A/B=1-377"/>
</dbReference>
<dbReference type="PDB" id="5THT">
    <property type="method" value="X-ray"/>
    <property type="resolution" value="2.41 A"/>
    <property type="chains" value="A/B/C/D=1-377"/>
</dbReference>
<dbReference type="PDB" id="5THU">
    <property type="method" value="X-ray"/>
    <property type="resolution" value="1.95 A"/>
    <property type="chains" value="A/B=1-377"/>
</dbReference>
<dbReference type="PDB" id="5THV">
    <property type="method" value="X-ray"/>
    <property type="resolution" value="1.87 A"/>
    <property type="chains" value="A/B=1-377"/>
</dbReference>
<dbReference type="PDB" id="5VI6">
    <property type="method" value="X-ray"/>
    <property type="resolution" value="1.24 A"/>
    <property type="chains" value="A=8-377"/>
</dbReference>
<dbReference type="PDB" id="6HSK">
    <property type="method" value="X-ray"/>
    <property type="resolution" value="2.10 A"/>
    <property type="chains" value="A/B=1-377"/>
</dbReference>
<dbReference type="PDB" id="6ODA">
    <property type="method" value="X-ray"/>
    <property type="resolution" value="2.88 A"/>
    <property type="chains" value="A/B/C=1-377"/>
</dbReference>
<dbReference type="PDB" id="6ODB">
    <property type="method" value="X-ray"/>
    <property type="resolution" value="2.70 A"/>
    <property type="chains" value="A/B/C=1-377"/>
</dbReference>
<dbReference type="PDB" id="6ODC">
    <property type="method" value="X-ray"/>
    <property type="resolution" value="2.80 A"/>
    <property type="chains" value="A/B/C=1-377"/>
</dbReference>
<dbReference type="PDB" id="7JVU">
    <property type="method" value="X-ray"/>
    <property type="resolution" value="1.50 A"/>
    <property type="chains" value="A/B=1-377"/>
</dbReference>
<dbReference type="PDB" id="7JVV">
    <property type="method" value="X-ray"/>
    <property type="resolution" value="1.84 A"/>
    <property type="chains" value="A/B=1-377"/>
</dbReference>
<dbReference type="PDB" id="7JVW">
    <property type="method" value="X-ray"/>
    <property type="resolution" value="2.40 A"/>
    <property type="chains" value="A/B=1-377"/>
</dbReference>
<dbReference type="PDBsum" id="1T64"/>
<dbReference type="PDBsum" id="1T67"/>
<dbReference type="PDBsum" id="1T69"/>
<dbReference type="PDBsum" id="1VKG"/>
<dbReference type="PDBsum" id="1W22"/>
<dbReference type="PDBsum" id="2V5W"/>
<dbReference type="PDBsum" id="2V5X"/>
<dbReference type="PDBsum" id="3EW8"/>
<dbReference type="PDBsum" id="3EWF"/>
<dbReference type="PDBsum" id="3EZP"/>
<dbReference type="PDBsum" id="3EZT"/>
<dbReference type="PDBsum" id="3F06"/>
<dbReference type="PDBsum" id="3F07"/>
<dbReference type="PDBsum" id="3F0R"/>
<dbReference type="PDBsum" id="3MZ3"/>
<dbReference type="PDBsum" id="3MZ4"/>
<dbReference type="PDBsum" id="3MZ6"/>
<dbReference type="PDBsum" id="3MZ7"/>
<dbReference type="PDBsum" id="3RQD"/>
<dbReference type="PDBsum" id="3SFF"/>
<dbReference type="PDBsum" id="3SFH"/>
<dbReference type="PDBsum" id="4QA0"/>
<dbReference type="PDBsum" id="4QA1"/>
<dbReference type="PDBsum" id="4QA2"/>
<dbReference type="PDBsum" id="4QA3"/>
<dbReference type="PDBsum" id="4QA4"/>
<dbReference type="PDBsum" id="4QA5"/>
<dbReference type="PDBsum" id="4QA6"/>
<dbReference type="PDBsum" id="4QA7"/>
<dbReference type="PDBsum" id="4RN0"/>
<dbReference type="PDBsum" id="4RN1"/>
<dbReference type="PDBsum" id="4RN2"/>
<dbReference type="PDBsum" id="5BWZ"/>
<dbReference type="PDBsum" id="5D1B"/>
<dbReference type="PDBsum" id="5D1C"/>
<dbReference type="PDBsum" id="5D1D"/>
<dbReference type="PDBsum" id="5DC5"/>
<dbReference type="PDBsum" id="5DC6"/>
<dbReference type="PDBsum" id="5DC7"/>
<dbReference type="PDBsum" id="5DC8"/>
<dbReference type="PDBsum" id="5FCW"/>
<dbReference type="PDBsum" id="5THS"/>
<dbReference type="PDBsum" id="5THT"/>
<dbReference type="PDBsum" id="5THU"/>
<dbReference type="PDBsum" id="5THV"/>
<dbReference type="PDBsum" id="5VI6"/>
<dbReference type="PDBsum" id="6HSK"/>
<dbReference type="PDBsum" id="6ODA"/>
<dbReference type="PDBsum" id="6ODB"/>
<dbReference type="PDBsum" id="6ODC"/>
<dbReference type="PDBsum" id="7JVU"/>
<dbReference type="PDBsum" id="7JVV"/>
<dbReference type="PDBsum" id="7JVW"/>
<dbReference type="SMR" id="Q9BY41"/>
<dbReference type="BioGRID" id="120968">
    <property type="interactions" value="68"/>
</dbReference>
<dbReference type="CORUM" id="Q9BY41"/>
<dbReference type="ELM" id="Q9BY41"/>
<dbReference type="FunCoup" id="Q9BY41">
    <property type="interactions" value="1950"/>
</dbReference>
<dbReference type="IntAct" id="Q9BY41">
    <property type="interactions" value="19"/>
</dbReference>
<dbReference type="MINT" id="Q9BY41"/>
<dbReference type="STRING" id="9606.ENSP00000362674"/>
<dbReference type="BindingDB" id="Q9BY41"/>
<dbReference type="ChEMBL" id="CHEMBL3192"/>
<dbReference type="DrugBank" id="DB07350">
    <property type="generic name" value="(2E)-N-hydroxy-3-[1-methyl-4-(phenylacetyl)-1H-pyrrol-2-yl]prop-2-enamide"/>
</dbReference>
<dbReference type="DrugBank" id="DB02565">
    <property type="generic name" value="4-(dimethylamino)-N-[7-(hydroxyamino)-7-oxoheptyl]benzamide"/>
</dbReference>
<dbReference type="DrugBank" id="DB07586">
    <property type="generic name" value="5-(4-METHYL-BENZOYLAMINO)-BIPHENYL-3,4'-DICARBOXYLIC ACID 3-DIMETHYLAMIDE-4'-HYDROXYAMIDE"/>
</dbReference>
<dbReference type="DrugBank" id="DB07553">
    <property type="generic name" value="9,9,9-TRIFLUORO-8-OXO-N-PHENYLNONANAMIDE"/>
</dbReference>
<dbReference type="DrugBank" id="DB12565">
    <property type="generic name" value="Abexinostat"/>
</dbReference>
<dbReference type="DrugBank" id="DB05015">
    <property type="generic name" value="Belinostat"/>
</dbReference>
<dbReference type="DrugBank" id="DB08168">
    <property type="generic name" value="Coumarin 120"/>
</dbReference>
<dbReference type="DrugBank" id="DB01262">
    <property type="generic name" value="Decitabine"/>
</dbReference>
<dbReference type="DrugBank" id="DB11841">
    <property type="generic name" value="Entinostat"/>
</dbReference>
<dbReference type="DrugBank" id="DB14490">
    <property type="generic name" value="Ferrous ascorbate"/>
</dbReference>
<dbReference type="DrugBank" id="DB14491">
    <property type="generic name" value="Ferrous fumarate"/>
</dbReference>
<dbReference type="DrugBank" id="DB14488">
    <property type="generic name" value="Ferrous gluconate"/>
</dbReference>
<dbReference type="DrugBank" id="DB14501">
    <property type="generic name" value="Ferrous glycine sulfate"/>
</dbReference>
<dbReference type="DrugBank" id="DB14489">
    <property type="generic name" value="Ferrous succinate"/>
</dbReference>
<dbReference type="DrugBank" id="DB12645">
    <property type="generic name" value="Givinostat"/>
</dbReference>
<dbReference type="DrugBank" id="DB01592">
    <property type="generic name" value="Iron"/>
</dbReference>
<dbReference type="DrugBank" id="DB14979">
    <property type="generic name" value="Martinostat"/>
</dbReference>
<dbReference type="DrugBank" id="DB02917">
    <property type="generic name" value="N-Hydroxy-4-(Methyl{[5-(2-Pyridinyl)-2-Thienyl]Sulfonyl}Amino)Benzamide"/>
</dbReference>
<dbReference type="DrugBank" id="DB06603">
    <property type="generic name" value="Panobinostat"/>
</dbReference>
<dbReference type="DrugBank" id="DB06819">
    <property type="generic name" value="Phenylbutyric acid"/>
</dbReference>
<dbReference type="DrugBank" id="DB03766">
    <property type="generic name" value="Propanoic acid"/>
</dbReference>
<dbReference type="DrugBank" id="DB12847">
    <property type="generic name" value="Pyroxamide"/>
</dbReference>
<dbReference type="DrugBank" id="DB06176">
    <property type="generic name" value="Romidepsin"/>
</dbReference>
<dbReference type="DrugBank" id="DB04297">
    <property type="generic name" value="Trichostatin A"/>
</dbReference>
<dbReference type="DrugBank" id="DB00313">
    <property type="generic name" value="Valproic acid"/>
</dbReference>
<dbReference type="DrugBank" id="DB02546">
    <property type="generic name" value="Vorinostat"/>
</dbReference>
<dbReference type="DrugBank" id="DB01593">
    <property type="generic name" value="Zinc"/>
</dbReference>
<dbReference type="DrugBank" id="DB14487">
    <property type="generic name" value="Zinc acetate"/>
</dbReference>
<dbReference type="DrugBank" id="DB14533">
    <property type="generic name" value="Zinc chloride"/>
</dbReference>
<dbReference type="DrugBank" id="DB14548">
    <property type="generic name" value="Zinc sulfate, unspecified form"/>
</dbReference>
<dbReference type="DrugCentral" id="Q9BY41"/>
<dbReference type="GuidetoPHARMACOLOGY" id="2619"/>
<dbReference type="GlyGen" id="Q9BY41">
    <property type="glycosylation" value="1 site, 1 O-linked glycan (1 site)"/>
</dbReference>
<dbReference type="iPTMnet" id="Q9BY41"/>
<dbReference type="PhosphoSitePlus" id="Q9BY41"/>
<dbReference type="BioMuta" id="HDAC8"/>
<dbReference type="DMDM" id="29839394"/>
<dbReference type="jPOST" id="Q9BY41"/>
<dbReference type="MassIVE" id="Q9BY41"/>
<dbReference type="PaxDb" id="9606-ENSP00000362674"/>
<dbReference type="PeptideAtlas" id="Q9BY41"/>
<dbReference type="ProteomicsDB" id="1349"/>
<dbReference type="ProteomicsDB" id="79574">
    <molecule id="Q9BY41-1"/>
</dbReference>
<dbReference type="ProteomicsDB" id="79577">
    <molecule id="Q9BY41-4"/>
</dbReference>
<dbReference type="ProteomicsDB" id="79578">
    <molecule id="Q9BY41-5"/>
</dbReference>
<dbReference type="ProteomicsDB" id="875"/>
<dbReference type="ProteomicsDB" id="884"/>
<dbReference type="Pumba" id="Q9BY41"/>
<dbReference type="Antibodypedia" id="13705">
    <property type="antibodies" value="702 antibodies from 44 providers"/>
</dbReference>
<dbReference type="DNASU" id="55869"/>
<dbReference type="Ensembl" id="ENST00000373554.6">
    <molecule id="Q9BY41-8"/>
    <property type="protein sequence ID" value="ENSP00000362655.1"/>
    <property type="gene ID" value="ENSG00000147099.21"/>
</dbReference>
<dbReference type="Ensembl" id="ENST00000373556.8">
    <molecule id="Q9BY41-7"/>
    <property type="protein sequence ID" value="ENSP00000362657.3"/>
    <property type="gene ID" value="ENSG00000147099.21"/>
</dbReference>
<dbReference type="Ensembl" id="ENST00000373559.8">
    <molecule id="Q9BY41-6"/>
    <property type="protein sequence ID" value="ENSP00000362660.4"/>
    <property type="gene ID" value="ENSG00000147099.21"/>
</dbReference>
<dbReference type="Ensembl" id="ENST00000373573.9">
    <molecule id="Q9BY41-1"/>
    <property type="protein sequence ID" value="ENSP00000362674.3"/>
    <property type="gene ID" value="ENSG00000147099.21"/>
</dbReference>
<dbReference type="Ensembl" id="ENST00000373589.9">
    <molecule id="Q9BY41-4"/>
    <property type="protein sequence ID" value="ENSP00000362691.4"/>
    <property type="gene ID" value="ENSG00000147099.21"/>
</dbReference>
<dbReference type="Ensembl" id="ENST00000439122.7">
    <molecule id="Q9BY41-5"/>
    <property type="protein sequence ID" value="ENSP00000414486.2"/>
    <property type="gene ID" value="ENSG00000147099.21"/>
</dbReference>
<dbReference type="Ensembl" id="ENST00000649116.1">
    <molecule id="Q9BY41-8"/>
    <property type="protein sequence ID" value="ENSP00000497925.1"/>
    <property type="gene ID" value="ENSG00000147099.21"/>
</dbReference>
<dbReference type="GeneID" id="55869"/>
<dbReference type="KEGG" id="hsa:55869"/>
<dbReference type="MANE-Select" id="ENST00000373573.9">
    <property type="protein sequence ID" value="ENSP00000362674.3"/>
    <property type="RefSeq nucleotide sequence ID" value="NM_018486.3"/>
    <property type="RefSeq protein sequence ID" value="NP_060956.1"/>
</dbReference>
<dbReference type="UCSC" id="uc004eau.3">
    <molecule id="Q9BY41-1"/>
    <property type="organism name" value="human"/>
</dbReference>
<dbReference type="AGR" id="HGNC:13315"/>
<dbReference type="CTD" id="55869"/>
<dbReference type="DisGeNET" id="55869"/>
<dbReference type="GeneCards" id="HDAC8"/>
<dbReference type="GeneReviews" id="HDAC8"/>
<dbReference type="HGNC" id="HGNC:13315">
    <property type="gene designation" value="HDAC8"/>
</dbReference>
<dbReference type="HPA" id="ENSG00000147099">
    <property type="expression patterns" value="Low tissue specificity"/>
</dbReference>
<dbReference type="MalaCards" id="HDAC8"/>
<dbReference type="MIM" id="300269">
    <property type="type" value="gene"/>
</dbReference>
<dbReference type="MIM" id="300882">
    <property type="type" value="phenotype"/>
</dbReference>
<dbReference type="neXtProt" id="NX_Q9BY41"/>
<dbReference type="OpenTargets" id="ENSG00000147099"/>
<dbReference type="Orphanet" id="199">
    <property type="disease" value="Cornelia de Lange syndrome"/>
</dbReference>
<dbReference type="Orphanet" id="3459">
    <property type="disease" value="Wilson-Turner syndrome"/>
</dbReference>
<dbReference type="PharmGKB" id="PA37766"/>
<dbReference type="VEuPathDB" id="HostDB:ENSG00000147099"/>
<dbReference type="eggNOG" id="KOG1342">
    <property type="taxonomic scope" value="Eukaryota"/>
</dbReference>
<dbReference type="GeneTree" id="ENSGT00940000157843"/>
<dbReference type="HOGENOM" id="CLU_007727_7_6_1"/>
<dbReference type="InParanoid" id="Q9BY41"/>
<dbReference type="OMA" id="CFWHSTG"/>
<dbReference type="OrthoDB" id="73273at2759"/>
<dbReference type="PAN-GO" id="Q9BY41">
    <property type="GO annotations" value="3 GO annotations based on evolutionary models"/>
</dbReference>
<dbReference type="PhylomeDB" id="Q9BY41"/>
<dbReference type="TreeFam" id="TF106175"/>
<dbReference type="BRENDA" id="3.5.1.98">
    <property type="organism ID" value="2681"/>
</dbReference>
<dbReference type="PathwayCommons" id="Q9BY41"/>
<dbReference type="Reactome" id="R-HSA-2122947">
    <property type="pathway name" value="NOTCH1 Intracellular Domain Regulates Transcription"/>
</dbReference>
<dbReference type="Reactome" id="R-HSA-2467813">
    <molecule id="Q9BY41-1"/>
    <property type="pathway name" value="Separation of Sister Chromatids"/>
</dbReference>
<dbReference type="Reactome" id="R-HSA-2500257">
    <molecule id="Q9BY41-1"/>
    <property type="pathway name" value="Resolution of Sister Chromatid Cohesion"/>
</dbReference>
<dbReference type="Reactome" id="R-HSA-2644606">
    <property type="pathway name" value="Constitutive Signaling by NOTCH1 PEST Domain Mutants"/>
</dbReference>
<dbReference type="Reactome" id="R-HSA-2894862">
    <property type="pathway name" value="Constitutive Signaling by NOTCH1 HD+PEST Domain Mutants"/>
</dbReference>
<dbReference type="Reactome" id="R-HSA-3214815">
    <property type="pathway name" value="HDACs deacetylate histones"/>
</dbReference>
<dbReference type="Reactome" id="R-HSA-350054">
    <property type="pathway name" value="Notch-HLH transcription pathway"/>
</dbReference>
<dbReference type="SABIO-RK" id="Q9BY41"/>
<dbReference type="SignaLink" id="Q9BY41"/>
<dbReference type="SIGNOR" id="Q9BY41"/>
<dbReference type="BioGRID-ORCS" id="55869">
    <property type="hits" value="52 hits in 798 CRISPR screens"/>
</dbReference>
<dbReference type="CD-CODE" id="8C2F96ED">
    <property type="entry name" value="Centrosome"/>
</dbReference>
<dbReference type="ChiTaRS" id="HDAC8">
    <property type="organism name" value="human"/>
</dbReference>
<dbReference type="EvolutionaryTrace" id="Q9BY41"/>
<dbReference type="GeneWiki" id="HDAC8"/>
<dbReference type="GenomeRNAi" id="55869"/>
<dbReference type="Pharos" id="Q9BY41">
    <property type="development level" value="Tclin"/>
</dbReference>
<dbReference type="PRO" id="PR:Q9BY41"/>
<dbReference type="Proteomes" id="UP000005640">
    <property type="component" value="Chromosome X"/>
</dbReference>
<dbReference type="RNAct" id="Q9BY41">
    <property type="molecule type" value="protein"/>
</dbReference>
<dbReference type="Bgee" id="ENSG00000147099">
    <property type="expression patterns" value="Expressed in colonic epithelium and 174 other cell types or tissues"/>
</dbReference>
<dbReference type="ExpressionAtlas" id="Q9BY41">
    <property type="expression patterns" value="baseline and differential"/>
</dbReference>
<dbReference type="GO" id="GO:0005737">
    <property type="term" value="C:cytoplasm"/>
    <property type="evidence" value="ECO:0000304"/>
    <property type="project" value="UniProtKB"/>
</dbReference>
<dbReference type="GO" id="GO:0000118">
    <property type="term" value="C:histone deacetylase complex"/>
    <property type="evidence" value="ECO:0000304"/>
    <property type="project" value="UniProtKB"/>
</dbReference>
<dbReference type="GO" id="GO:0000228">
    <property type="term" value="C:nuclear chromosome"/>
    <property type="evidence" value="ECO:0000304"/>
    <property type="project" value="ProtInc"/>
</dbReference>
<dbReference type="GO" id="GO:0005654">
    <property type="term" value="C:nucleoplasm"/>
    <property type="evidence" value="ECO:0000304"/>
    <property type="project" value="Reactome"/>
</dbReference>
<dbReference type="GO" id="GO:0005634">
    <property type="term" value="C:nucleus"/>
    <property type="evidence" value="ECO:0000304"/>
    <property type="project" value="UniProtKB"/>
</dbReference>
<dbReference type="GO" id="GO:0140297">
    <property type="term" value="F:DNA-binding transcription factor binding"/>
    <property type="evidence" value="ECO:0000304"/>
    <property type="project" value="UniProtKB"/>
</dbReference>
<dbReference type="GO" id="GO:0004407">
    <property type="term" value="F:histone deacetylase activity"/>
    <property type="evidence" value="ECO:0000314"/>
    <property type="project" value="UniProtKB"/>
</dbReference>
<dbReference type="GO" id="GO:0141221">
    <property type="term" value="F:histone deacetylase activity, hydrolytic mechanism"/>
    <property type="evidence" value="ECO:0007669"/>
    <property type="project" value="UniProtKB-EC"/>
</dbReference>
<dbReference type="GO" id="GO:0160009">
    <property type="term" value="F:histone decrotonylase activity"/>
    <property type="evidence" value="ECO:0000314"/>
    <property type="project" value="UniProtKB"/>
</dbReference>
<dbReference type="GO" id="GO:0030544">
    <property type="term" value="F:Hsp70 protein binding"/>
    <property type="evidence" value="ECO:0000353"/>
    <property type="project" value="BHF-UCL"/>
</dbReference>
<dbReference type="GO" id="GO:0051879">
    <property type="term" value="F:Hsp90 protein binding"/>
    <property type="evidence" value="ECO:0000353"/>
    <property type="project" value="BHF-UCL"/>
</dbReference>
<dbReference type="GO" id="GO:0046872">
    <property type="term" value="F:metal ion binding"/>
    <property type="evidence" value="ECO:0007669"/>
    <property type="project" value="UniProtKB-KW"/>
</dbReference>
<dbReference type="GO" id="GO:0033558">
    <property type="term" value="F:protein lysine deacetylase activity"/>
    <property type="evidence" value="ECO:0000314"/>
    <property type="project" value="UniProtKB"/>
</dbReference>
<dbReference type="GO" id="GO:0006325">
    <property type="term" value="P:chromatin organization"/>
    <property type="evidence" value="ECO:0000304"/>
    <property type="project" value="UniProtKB"/>
</dbReference>
<dbReference type="GO" id="GO:0031507">
    <property type="term" value="P:heterochromatin formation"/>
    <property type="evidence" value="ECO:0000318"/>
    <property type="project" value="GO_Central"/>
</dbReference>
<dbReference type="GO" id="GO:0007064">
    <property type="term" value="P:mitotic sister chromatid cohesion"/>
    <property type="evidence" value="ECO:0000315"/>
    <property type="project" value="UniProtKB"/>
</dbReference>
<dbReference type="GO" id="GO:0031397">
    <property type="term" value="P:negative regulation of protein ubiquitination"/>
    <property type="evidence" value="ECO:0000314"/>
    <property type="project" value="BHF-UCL"/>
</dbReference>
<dbReference type="GO" id="GO:0000122">
    <property type="term" value="P:negative regulation of transcription by RNA polymerase II"/>
    <property type="evidence" value="ECO:0000304"/>
    <property type="project" value="ProtInc"/>
</dbReference>
<dbReference type="GO" id="GO:0031647">
    <property type="term" value="P:regulation of protein stability"/>
    <property type="evidence" value="ECO:0000314"/>
    <property type="project" value="BHF-UCL"/>
</dbReference>
<dbReference type="GO" id="GO:0032204">
    <property type="term" value="P:regulation of telomere maintenance"/>
    <property type="evidence" value="ECO:0000315"/>
    <property type="project" value="BHF-UCL"/>
</dbReference>
<dbReference type="CDD" id="cd10000">
    <property type="entry name" value="HDAC8"/>
    <property type="match status" value="1"/>
</dbReference>
<dbReference type="FunFam" id="3.40.800.20:FF:000006">
    <property type="entry name" value="Histone deacetylase 8"/>
    <property type="match status" value="1"/>
</dbReference>
<dbReference type="Gene3D" id="3.40.800.20">
    <property type="entry name" value="Histone deacetylase domain"/>
    <property type="match status" value="1"/>
</dbReference>
<dbReference type="InterPro" id="IPR050284">
    <property type="entry name" value="HDAC_PDAC"/>
</dbReference>
<dbReference type="InterPro" id="IPR000286">
    <property type="entry name" value="His_deacetylse"/>
</dbReference>
<dbReference type="InterPro" id="IPR003084">
    <property type="entry name" value="His_deacetylse_1"/>
</dbReference>
<dbReference type="InterPro" id="IPR023801">
    <property type="entry name" value="His_deacetylse_dom"/>
</dbReference>
<dbReference type="InterPro" id="IPR037138">
    <property type="entry name" value="His_deacetylse_dom_sf"/>
</dbReference>
<dbReference type="InterPro" id="IPR023696">
    <property type="entry name" value="Ureohydrolase_dom_sf"/>
</dbReference>
<dbReference type="PANTHER" id="PTHR10625:SF14">
    <property type="entry name" value="HISTONE DEACETYLASE 8"/>
    <property type="match status" value="1"/>
</dbReference>
<dbReference type="PANTHER" id="PTHR10625">
    <property type="entry name" value="HISTONE DEACETYLASE HDAC1-RELATED"/>
    <property type="match status" value="1"/>
</dbReference>
<dbReference type="Pfam" id="PF00850">
    <property type="entry name" value="Hist_deacetyl"/>
    <property type="match status" value="1"/>
</dbReference>
<dbReference type="PIRSF" id="PIRSF037913">
    <property type="entry name" value="His_deacetylse_1"/>
    <property type="match status" value="1"/>
</dbReference>
<dbReference type="PRINTS" id="PR01270">
    <property type="entry name" value="HDASUPER"/>
</dbReference>
<dbReference type="PRINTS" id="PR01271">
    <property type="entry name" value="HISDACETLASE"/>
</dbReference>
<dbReference type="SUPFAM" id="SSF52768">
    <property type="entry name" value="Arginase/deacetylase"/>
    <property type="match status" value="1"/>
</dbReference>
<gene>
    <name evidence="17 22" type="primary">HDAC8</name>
    <name type="synonym">HDACL1</name>
    <name type="ORF">CDA07</name>
</gene>